<comment type="catalytic activity">
    <reaction evidence="3">
        <text>L-tyrosyl-[protein] + ATP = O-phospho-L-tyrosyl-[protein] + ADP + H(+)</text>
        <dbReference type="Rhea" id="RHEA:10596"/>
        <dbReference type="Rhea" id="RHEA-COMP:10136"/>
        <dbReference type="Rhea" id="RHEA-COMP:20101"/>
        <dbReference type="ChEBI" id="CHEBI:15378"/>
        <dbReference type="ChEBI" id="CHEBI:30616"/>
        <dbReference type="ChEBI" id="CHEBI:46858"/>
        <dbReference type="ChEBI" id="CHEBI:61978"/>
        <dbReference type="ChEBI" id="CHEBI:456216"/>
        <dbReference type="EC" id="2.7.10.2"/>
    </reaction>
</comment>
<comment type="subcellular location">
    <subcellularLocation>
        <location evidence="4">Cytoplasm</location>
    </subcellularLocation>
</comment>
<comment type="similarity">
    <text evidence="1">Belongs to the protein kinase superfamily. Tyr protein kinase family.</text>
</comment>
<name>SRK3_SPOLA</name>
<organism>
    <name type="scientific">Spongilla lacustris</name>
    <name type="common">Freshwater sponge</name>
    <dbReference type="NCBI Taxonomy" id="6055"/>
    <lineage>
        <taxon>Eukaryota</taxon>
        <taxon>Metazoa</taxon>
        <taxon>Porifera</taxon>
        <taxon>Demospongiae</taxon>
        <taxon>Heteroscleromorpha</taxon>
        <taxon>Spongillida</taxon>
        <taxon>Spongillidae</taxon>
        <taxon>Spongilla</taxon>
    </lineage>
</organism>
<feature type="chain" id="PRO_0000088159" description="Tyrosine-protein kinase SRK3">
    <location>
        <begin position="1" status="less than"/>
        <end position="334"/>
    </location>
</feature>
<feature type="domain" description="SH2" evidence="2">
    <location>
        <begin position="1" status="less than"/>
        <end position="42"/>
    </location>
</feature>
<feature type="domain" description="Protein kinase" evidence="1">
    <location>
        <begin position="66"/>
        <end position="321"/>
    </location>
</feature>
<feature type="active site" description="Proton acceptor" evidence="1 3">
    <location>
        <position position="186"/>
    </location>
</feature>
<feature type="binding site" evidence="1">
    <location>
        <begin position="72"/>
        <end position="80"/>
    </location>
    <ligand>
        <name>ATP</name>
        <dbReference type="ChEBI" id="CHEBI:30616"/>
    </ligand>
</feature>
<feature type="binding site" evidence="1">
    <location>
        <position position="94"/>
    </location>
    <ligand>
        <name>ATP</name>
        <dbReference type="ChEBI" id="CHEBI:30616"/>
    </ligand>
</feature>
<feature type="non-terminal residue">
    <location>
        <position position="1"/>
    </location>
</feature>
<proteinExistence type="evidence at transcript level"/>
<gene>
    <name type="primary">SRK3</name>
</gene>
<accession>P42689</accession>
<evidence type="ECO:0000255" key="1">
    <source>
        <dbReference type="PROSITE-ProRule" id="PRU00159"/>
    </source>
</evidence>
<evidence type="ECO:0000255" key="2">
    <source>
        <dbReference type="PROSITE-ProRule" id="PRU00191"/>
    </source>
</evidence>
<evidence type="ECO:0000255" key="3">
    <source>
        <dbReference type="PROSITE-ProRule" id="PRU10028"/>
    </source>
</evidence>
<evidence type="ECO:0000305" key="4"/>
<sequence>IRTLDDGGFYMANRISFPTLQNLVSHYMMDADGLAQRLSRPCSRANIPITSGLSYKDEWEIDRTTIQLQRKLGQGNFGEVWAGVWNGTTAVAVKTLKPDTMEVKDFVQEAQVMKKIHHPNLLQLYAVCTIGEPIYIVTELMKYGSMLEYLKHGEGKNITLHQMVDMSAQIASGMTYLEAHSYIHRDLAARNILVGEGNVCKVADFGLARVIKEDIYNPREGTKFPIKWTAPEAALYNRFTIKSDVWSFGVLISEIVTHGRMPYPGMTNRQVLEAVDRGYRMPCPEGCPDPLYKIMLSCWKHEPDDRPTFESLKNLLEDYYVSAAEGSYREPAPR</sequence>
<reference key="1">
    <citation type="journal article" date="1992" name="Oncogene">
        <title>Multiple src-related kinase genes, srk1-4, in the fresh water sponge Spongilla lacustris.</title>
        <authorList>
            <person name="Ottilie S."/>
            <person name="Raulf F."/>
            <person name="Barnekow A."/>
            <person name="Hannig G."/>
            <person name="Schartl M."/>
        </authorList>
    </citation>
    <scope>NUCLEOTIDE SEQUENCE [MRNA]</scope>
</reference>
<keyword id="KW-0067">ATP-binding</keyword>
<keyword id="KW-0963">Cytoplasm</keyword>
<keyword id="KW-0418">Kinase</keyword>
<keyword id="KW-0547">Nucleotide-binding</keyword>
<keyword id="KW-0597">Phosphoprotein</keyword>
<keyword id="KW-0727">SH2 domain</keyword>
<keyword id="KW-0808">Transferase</keyword>
<keyword id="KW-0829">Tyrosine-protein kinase</keyword>
<protein>
    <recommendedName>
        <fullName>Tyrosine-protein kinase SRK3</fullName>
        <ecNumber>2.7.10.2</ecNumber>
    </recommendedName>
</protein>
<dbReference type="EC" id="2.7.10.2"/>
<dbReference type="EMBL" id="X61603">
    <property type="protein sequence ID" value="CAA43800.1"/>
    <property type="molecule type" value="mRNA"/>
</dbReference>
<dbReference type="PIR" id="S24552">
    <property type="entry name" value="S24552"/>
</dbReference>
<dbReference type="SMR" id="P42689"/>
<dbReference type="GO" id="GO:0005737">
    <property type="term" value="C:cytoplasm"/>
    <property type="evidence" value="ECO:0007669"/>
    <property type="project" value="UniProtKB-SubCell"/>
</dbReference>
<dbReference type="GO" id="GO:0005524">
    <property type="term" value="F:ATP binding"/>
    <property type="evidence" value="ECO:0007669"/>
    <property type="project" value="UniProtKB-KW"/>
</dbReference>
<dbReference type="GO" id="GO:0004715">
    <property type="term" value="F:non-membrane spanning protein tyrosine kinase activity"/>
    <property type="evidence" value="ECO:0007669"/>
    <property type="project" value="UniProtKB-EC"/>
</dbReference>
<dbReference type="CDD" id="cd05034">
    <property type="entry name" value="PTKc_Src_like"/>
    <property type="match status" value="1"/>
</dbReference>
<dbReference type="FunFam" id="1.10.510.10:FF:000318">
    <property type="entry name" value="Tyrosine-protein kinase"/>
    <property type="match status" value="1"/>
</dbReference>
<dbReference type="FunFam" id="3.30.200.20:FF:000037">
    <property type="entry name" value="Tyrosine-protein kinase"/>
    <property type="match status" value="1"/>
</dbReference>
<dbReference type="Gene3D" id="3.30.200.20">
    <property type="entry name" value="Phosphorylase Kinase, domain 1"/>
    <property type="match status" value="1"/>
</dbReference>
<dbReference type="Gene3D" id="3.30.505.10">
    <property type="entry name" value="SH2 domain"/>
    <property type="match status" value="1"/>
</dbReference>
<dbReference type="Gene3D" id="1.10.510.10">
    <property type="entry name" value="Transferase(Phosphotransferase) domain 1"/>
    <property type="match status" value="1"/>
</dbReference>
<dbReference type="InterPro" id="IPR011009">
    <property type="entry name" value="Kinase-like_dom_sf"/>
</dbReference>
<dbReference type="InterPro" id="IPR050198">
    <property type="entry name" value="Non-receptor_tyrosine_kinases"/>
</dbReference>
<dbReference type="InterPro" id="IPR000719">
    <property type="entry name" value="Prot_kinase_dom"/>
</dbReference>
<dbReference type="InterPro" id="IPR017441">
    <property type="entry name" value="Protein_kinase_ATP_BS"/>
</dbReference>
<dbReference type="InterPro" id="IPR001245">
    <property type="entry name" value="Ser-Thr/Tyr_kinase_cat_dom"/>
</dbReference>
<dbReference type="InterPro" id="IPR000980">
    <property type="entry name" value="SH2"/>
</dbReference>
<dbReference type="InterPro" id="IPR036860">
    <property type="entry name" value="SH2_dom_sf"/>
</dbReference>
<dbReference type="InterPro" id="IPR008266">
    <property type="entry name" value="Tyr_kinase_AS"/>
</dbReference>
<dbReference type="InterPro" id="IPR020635">
    <property type="entry name" value="Tyr_kinase_cat_dom"/>
</dbReference>
<dbReference type="PANTHER" id="PTHR24418">
    <property type="entry name" value="TYROSINE-PROTEIN KINASE"/>
    <property type="match status" value="1"/>
</dbReference>
<dbReference type="Pfam" id="PF07714">
    <property type="entry name" value="PK_Tyr_Ser-Thr"/>
    <property type="match status" value="1"/>
</dbReference>
<dbReference type="PIRSF" id="PIRSF000615">
    <property type="entry name" value="TyrPK_CSF1-R"/>
    <property type="match status" value="1"/>
</dbReference>
<dbReference type="PRINTS" id="PR00109">
    <property type="entry name" value="TYRKINASE"/>
</dbReference>
<dbReference type="SMART" id="SM00219">
    <property type="entry name" value="TyrKc"/>
    <property type="match status" value="1"/>
</dbReference>
<dbReference type="SUPFAM" id="SSF56112">
    <property type="entry name" value="Protein kinase-like (PK-like)"/>
    <property type="match status" value="1"/>
</dbReference>
<dbReference type="SUPFAM" id="SSF55550">
    <property type="entry name" value="SH2 domain"/>
    <property type="match status" value="1"/>
</dbReference>
<dbReference type="PROSITE" id="PS00107">
    <property type="entry name" value="PROTEIN_KINASE_ATP"/>
    <property type="match status" value="1"/>
</dbReference>
<dbReference type="PROSITE" id="PS50011">
    <property type="entry name" value="PROTEIN_KINASE_DOM"/>
    <property type="match status" value="1"/>
</dbReference>
<dbReference type="PROSITE" id="PS00109">
    <property type="entry name" value="PROTEIN_KINASE_TYR"/>
    <property type="match status" value="1"/>
</dbReference>
<dbReference type="PROSITE" id="PS50001">
    <property type="entry name" value="SH2"/>
    <property type="match status" value="1"/>
</dbReference>